<sequence length="421" mass="45249">MHIASVTSRCSRAGAEALRQGAQLAADARDTCRAGALLLRGSPCAIGWVAGWLSAEFPARVVTGHALSRISPRSIGRFGTSWAAQRADQILHAALVDAFGPDFRDLVWHPTGEQSEAARRSGLLNLPHIPGPHRRYAAQTSDIPYGPGGRENLLDIWRRPDLAPGRRAPVLIQVPGGAWTINGKRPQAYPLMSRMVELGWICVSINYSKSPRCTWPAHIVDVKRAIAWVRENIADYGGDPDFITITGGSAGAHLAALAALSANDPALQPGFESADTAVQAAAPYYGVYDLTNAENMHEMMMPFLEHFVMRSRYVDNPGLFKAASPISYVHSEAPPFFVLHGEKDPMVPSAQSRAFSAALRDAGAATVSYAELPNAHHAFDLAATVRSRMVAEAVSDFLGVIYGRRMGARKGSLALSSPPAS</sequence>
<dbReference type="EC" id="3.1.1.-" evidence="2"/>
<dbReference type="EMBL" id="AL123456">
    <property type="protein sequence ID" value="CCP45279.1"/>
    <property type="molecule type" value="Genomic_DNA"/>
</dbReference>
<dbReference type="RefSeq" id="NP_217001.1">
    <property type="nucleotide sequence ID" value="NC_000962.3"/>
</dbReference>
<dbReference type="RefSeq" id="WP_003412725.1">
    <property type="nucleotide sequence ID" value="NZ_NVQJ01000067.1"/>
</dbReference>
<dbReference type="SMR" id="I6Y9F7"/>
<dbReference type="FunCoup" id="I6Y9F7">
    <property type="interactions" value="77"/>
</dbReference>
<dbReference type="STRING" id="83332.Rv2485c"/>
<dbReference type="SwissLipids" id="SLP:000001357"/>
<dbReference type="ESTHER" id="myctu-Rv2485c">
    <property type="family name" value="BD-FAE"/>
</dbReference>
<dbReference type="PaxDb" id="83332-Rv2485c"/>
<dbReference type="GeneID" id="887876"/>
<dbReference type="KEGG" id="mtu:Rv2485c"/>
<dbReference type="KEGG" id="mtv:RVBD_2485c"/>
<dbReference type="PATRIC" id="fig|83332.111.peg.2781"/>
<dbReference type="TubercuList" id="Rv2485c"/>
<dbReference type="eggNOG" id="COG0657">
    <property type="taxonomic scope" value="Bacteria"/>
</dbReference>
<dbReference type="InParanoid" id="I6Y9F7"/>
<dbReference type="OrthoDB" id="9803828at2"/>
<dbReference type="PhylomeDB" id="I6Y9F7"/>
<dbReference type="PHI-base" id="PHI:7115"/>
<dbReference type="Proteomes" id="UP000001584">
    <property type="component" value="Chromosome"/>
</dbReference>
<dbReference type="GO" id="GO:0016787">
    <property type="term" value="F:hydrolase activity"/>
    <property type="evidence" value="ECO:0007669"/>
    <property type="project" value="UniProtKB-KW"/>
</dbReference>
<dbReference type="FunFam" id="3.40.50.1820:FF:000135">
    <property type="entry name" value="Esterase lipC"/>
    <property type="match status" value="1"/>
</dbReference>
<dbReference type="Gene3D" id="3.40.50.1820">
    <property type="entry name" value="alpha/beta hydrolase"/>
    <property type="match status" value="1"/>
</dbReference>
<dbReference type="InterPro" id="IPR029058">
    <property type="entry name" value="AB_hydrolase_fold"/>
</dbReference>
<dbReference type="InterPro" id="IPR049492">
    <property type="entry name" value="BD-FAE-like_dom"/>
</dbReference>
<dbReference type="InterPro" id="IPR050300">
    <property type="entry name" value="GDXG_lipolytic_enzyme"/>
</dbReference>
<dbReference type="PANTHER" id="PTHR48081">
    <property type="entry name" value="AB HYDROLASE SUPERFAMILY PROTEIN C4A8.06C"/>
    <property type="match status" value="1"/>
</dbReference>
<dbReference type="PANTHER" id="PTHR48081:SF33">
    <property type="entry name" value="KYNURENINE FORMAMIDASE"/>
    <property type="match status" value="1"/>
</dbReference>
<dbReference type="Pfam" id="PF20434">
    <property type="entry name" value="BD-FAE"/>
    <property type="match status" value="1"/>
</dbReference>
<dbReference type="SUPFAM" id="SSF53474">
    <property type="entry name" value="alpha/beta-Hydrolases"/>
    <property type="match status" value="1"/>
</dbReference>
<accession>I6Y9F7</accession>
<comment type="function">
    <text evidence="2 3">Shows lipase activity (PubMed:26398213). Is highly immunogenic and may play an important role in the virulence and pathogenesis of M.tuberculosis infection, by altering the balance of cytokines. Significantly down-regulates the expression level of pro-inflammatory cytokines (TNF-alpha and IFN-gamma) and up-regulates the level of anti-inflammatory cytokines such as IL-4 and IL-10 as compared to LPS stimulated macrophages. Also inhibits the expression of iNOS, TLR2 and transcription factor NF-kappa-B in LPS stimulated macrophages whereas the expression of TLR-4 remains unchanged (PubMed:28412202).</text>
</comment>
<comment type="catalytic activity">
    <reaction evidence="2">
        <text>hexadecanoate ester + H2O = an aliphatic alcohol + hexadecanoate + H(+)</text>
        <dbReference type="Rhea" id="RHEA:47392"/>
        <dbReference type="ChEBI" id="CHEBI:2571"/>
        <dbReference type="ChEBI" id="CHEBI:7896"/>
        <dbReference type="ChEBI" id="CHEBI:15377"/>
        <dbReference type="ChEBI" id="CHEBI:15378"/>
        <dbReference type="ChEBI" id="CHEBI:25835"/>
    </reaction>
</comment>
<comment type="similarity">
    <text evidence="4">Belongs to the 'GDXG' lipolytic enzyme family.</text>
</comment>
<organism>
    <name type="scientific">Mycobacterium tuberculosis (strain ATCC 25618 / H37Rv)</name>
    <dbReference type="NCBI Taxonomy" id="83332"/>
    <lineage>
        <taxon>Bacteria</taxon>
        <taxon>Bacillati</taxon>
        <taxon>Actinomycetota</taxon>
        <taxon>Actinomycetes</taxon>
        <taxon>Mycobacteriales</taxon>
        <taxon>Mycobacteriaceae</taxon>
        <taxon>Mycobacterium</taxon>
        <taxon>Mycobacterium tuberculosis complex</taxon>
    </lineage>
</organism>
<evidence type="ECO:0000250" key="1">
    <source>
        <dbReference type="UniProtKB" id="O06350"/>
    </source>
</evidence>
<evidence type="ECO:0000269" key="2">
    <source>
    </source>
</evidence>
<evidence type="ECO:0000269" key="3">
    <source>
    </source>
</evidence>
<evidence type="ECO:0000305" key="4"/>
<evidence type="ECO:0000312" key="5">
    <source>
        <dbReference type="EMBL" id="CCP45279.1"/>
    </source>
</evidence>
<keyword id="KW-0378">Hydrolase</keyword>
<keyword id="KW-1185">Reference proteome</keyword>
<keyword id="KW-0843">Virulence</keyword>
<protein>
    <recommendedName>
        <fullName evidence="4">Esterase LipQ</fullName>
        <ecNumber evidence="2">3.1.1.-</ecNumber>
    </recommendedName>
</protein>
<feature type="chain" id="PRO_0000448881" description="Esterase LipQ">
    <location>
        <begin position="1"/>
        <end position="421"/>
    </location>
</feature>
<feature type="active site" evidence="1">
    <location>
        <position position="249"/>
    </location>
</feature>
<feature type="active site" evidence="1">
    <location>
        <position position="344"/>
    </location>
</feature>
<feature type="active site" evidence="1">
    <location>
        <position position="377"/>
    </location>
</feature>
<gene>
    <name evidence="5" type="primary">lipQ</name>
    <name evidence="5" type="ordered locus">Rv2485c</name>
</gene>
<name>LIPQ_MYCTU</name>
<reference key="1">
    <citation type="journal article" date="1998" name="Nature">
        <title>Deciphering the biology of Mycobacterium tuberculosis from the complete genome sequence.</title>
        <authorList>
            <person name="Cole S.T."/>
            <person name="Brosch R."/>
            <person name="Parkhill J."/>
            <person name="Garnier T."/>
            <person name="Churcher C.M."/>
            <person name="Harris D.E."/>
            <person name="Gordon S.V."/>
            <person name="Eiglmeier K."/>
            <person name="Gas S."/>
            <person name="Barry C.E. III"/>
            <person name="Tekaia F."/>
            <person name="Badcock K."/>
            <person name="Basham D."/>
            <person name="Brown D."/>
            <person name="Chillingworth T."/>
            <person name="Connor R."/>
            <person name="Davies R.M."/>
            <person name="Devlin K."/>
            <person name="Feltwell T."/>
            <person name="Gentles S."/>
            <person name="Hamlin N."/>
            <person name="Holroyd S."/>
            <person name="Hornsby T."/>
            <person name="Jagels K."/>
            <person name="Krogh A."/>
            <person name="McLean J."/>
            <person name="Moule S."/>
            <person name="Murphy L.D."/>
            <person name="Oliver S."/>
            <person name="Osborne J."/>
            <person name="Quail M.A."/>
            <person name="Rajandream M.A."/>
            <person name="Rogers J."/>
            <person name="Rutter S."/>
            <person name="Seeger K."/>
            <person name="Skelton S."/>
            <person name="Squares S."/>
            <person name="Squares R."/>
            <person name="Sulston J.E."/>
            <person name="Taylor K."/>
            <person name="Whitehead S."/>
            <person name="Barrell B.G."/>
        </authorList>
    </citation>
    <scope>NUCLEOTIDE SEQUENCE [LARGE SCALE GENOMIC DNA]</scope>
    <source>
        <strain>ATCC 25618 / H37Rv</strain>
    </source>
</reference>
<reference key="2">
    <citation type="journal article" date="2015" name="PLoS ONE">
        <title>Identification and characterization of lipase activity and immunogenicity of LipL from Mycobacterium tuberculosis.</title>
        <authorList>
            <person name="Cao J."/>
            <person name="Dang G."/>
            <person name="Li H."/>
            <person name="Li T."/>
            <person name="Yue Z."/>
            <person name="Li N."/>
            <person name="Liu Y."/>
            <person name="Liu S."/>
            <person name="Chen L."/>
        </authorList>
    </citation>
    <scope>FUNCTION</scope>
    <scope>CATALYTIC ACTIVITY</scope>
</reference>
<reference key="3">
    <citation type="journal article" date="2017" name="Microb. Pathog.">
        <title>The immunosuppressive effects of a novel recombinant LipQ (Rv2485c) protein of Mycobacterium tuberculosis on human macrophage cell lines.</title>
        <authorList>
            <person name="Kumar A."/>
            <person name="Manisha C."/>
            <person name="Sangha G.K."/>
            <person name="Shrivastava A."/>
            <person name="Kaur J."/>
        </authorList>
    </citation>
    <scope>FUNCTION IN VIRULENCE</scope>
</reference>
<proteinExistence type="evidence at protein level"/>